<dbReference type="EMBL" id="CU329671">
    <property type="protein sequence ID" value="CBA11511.1"/>
    <property type="molecule type" value="Genomic_DNA"/>
</dbReference>
<dbReference type="RefSeq" id="XP_002788943.1">
    <property type="nucleotide sequence ID" value="XM_002788897.2"/>
</dbReference>
<dbReference type="SMR" id="C6Y4C4"/>
<dbReference type="FunCoup" id="C6Y4C4">
    <property type="interactions" value="218"/>
</dbReference>
<dbReference type="STRING" id="284812.C6Y4C4"/>
<dbReference type="PaxDb" id="4896-SPBC26H8.16.1"/>
<dbReference type="EnsemblFungi" id="SPBC26H8.16.1">
    <property type="protein sequence ID" value="SPBC26H8.16.1:pep"/>
    <property type="gene ID" value="SPBC26H8.16"/>
</dbReference>
<dbReference type="PomBase" id="SPBC26H8.16"/>
<dbReference type="VEuPathDB" id="FungiDB:SPBC26H8.16"/>
<dbReference type="eggNOG" id="ENOG502S6UN">
    <property type="taxonomic scope" value="Eukaryota"/>
</dbReference>
<dbReference type="HOGENOM" id="CLU_101052_2_1_1"/>
<dbReference type="InParanoid" id="C6Y4C4"/>
<dbReference type="OMA" id="PTIHGDY"/>
<dbReference type="Reactome" id="R-SPO-9854311">
    <property type="pathway name" value="Maturation of TCA enzymes and regulation of TCA cycle"/>
</dbReference>
<dbReference type="PRO" id="PR:C6Y4C4"/>
<dbReference type="Proteomes" id="UP000002485">
    <property type="component" value="Chromosome II"/>
</dbReference>
<dbReference type="GO" id="GO:0005759">
    <property type="term" value="C:mitochondrial matrix"/>
    <property type="evidence" value="ECO:0000266"/>
    <property type="project" value="PomBase"/>
</dbReference>
<dbReference type="GO" id="GO:0005739">
    <property type="term" value="C:mitochondrion"/>
    <property type="evidence" value="ECO:0000318"/>
    <property type="project" value="GO_Central"/>
</dbReference>
<dbReference type="GO" id="GO:0034553">
    <property type="term" value="P:mitochondrial respiratory chain complex II assembly"/>
    <property type="evidence" value="ECO:0000318"/>
    <property type="project" value="GO_Central"/>
</dbReference>
<dbReference type="InterPro" id="IPR012875">
    <property type="entry name" value="SDHF4"/>
</dbReference>
<dbReference type="PANTHER" id="PTHR28524">
    <property type="entry name" value="SUCCINATE DEHYDROGENASE ASSEMBLY FACTOR 4, MITOCHONDRIAL"/>
    <property type="match status" value="1"/>
</dbReference>
<dbReference type="PANTHER" id="PTHR28524:SF3">
    <property type="entry name" value="SUCCINATE DEHYDROGENASE ASSEMBLY FACTOR 4, MITOCHONDRIAL"/>
    <property type="match status" value="1"/>
</dbReference>
<dbReference type="Pfam" id="PF07896">
    <property type="entry name" value="DUF1674"/>
    <property type="match status" value="1"/>
</dbReference>
<protein>
    <recommendedName>
        <fullName evidence="1">Succinate dehydrogenase assembly factor 4, mitochondrial</fullName>
        <shortName evidence="1">SDH assembly factor 4</shortName>
        <shortName evidence="1">SDHAF4</shortName>
    </recommendedName>
</protein>
<keyword id="KW-0143">Chaperone</keyword>
<keyword id="KW-0496">Mitochondrion</keyword>
<keyword id="KW-1185">Reference proteome</keyword>
<keyword id="KW-0809">Transit peptide</keyword>
<evidence type="ECO:0000250" key="1">
    <source>
        <dbReference type="UniProtKB" id="P38345"/>
    </source>
</evidence>
<evidence type="ECO:0000255" key="2"/>
<evidence type="ECO:0000256" key="3">
    <source>
        <dbReference type="SAM" id="MobiDB-lite"/>
    </source>
</evidence>
<evidence type="ECO:0000305" key="4"/>
<evidence type="ECO:0000312" key="5">
    <source>
        <dbReference type="PomBase" id="SPBC26H8.16"/>
    </source>
</evidence>
<proteinExistence type="evidence at transcript level"/>
<feature type="transit peptide" description="Mitochondrion" evidence="2">
    <location>
        <begin position="1"/>
        <end position="31"/>
    </location>
</feature>
<feature type="chain" id="PRO_0000389141" description="Succinate dehydrogenase assembly factor 4, mitochondrial">
    <location>
        <begin position="32"/>
        <end position="100"/>
    </location>
</feature>
<feature type="region of interest" description="Disordered" evidence="3">
    <location>
        <begin position="24"/>
        <end position="100"/>
    </location>
</feature>
<feature type="compositionally biased region" description="Basic and acidic residues" evidence="3">
    <location>
        <begin position="36"/>
        <end position="68"/>
    </location>
</feature>
<feature type="compositionally biased region" description="Basic and acidic residues" evidence="3">
    <location>
        <begin position="85"/>
        <end position="100"/>
    </location>
</feature>
<reference key="1">
    <citation type="journal article" date="2002" name="Nature">
        <title>The genome sequence of Schizosaccharomyces pombe.</title>
        <authorList>
            <person name="Wood V."/>
            <person name="Gwilliam R."/>
            <person name="Rajandream M.A."/>
            <person name="Lyne M.H."/>
            <person name="Lyne R."/>
            <person name="Stewart A."/>
            <person name="Sgouros J.G."/>
            <person name="Peat N."/>
            <person name="Hayles J."/>
            <person name="Baker S.G."/>
            <person name="Basham D."/>
            <person name="Bowman S."/>
            <person name="Brooks K."/>
            <person name="Brown D."/>
            <person name="Brown S."/>
            <person name="Chillingworth T."/>
            <person name="Churcher C.M."/>
            <person name="Collins M."/>
            <person name="Connor R."/>
            <person name="Cronin A."/>
            <person name="Davis P."/>
            <person name="Feltwell T."/>
            <person name="Fraser A."/>
            <person name="Gentles S."/>
            <person name="Goble A."/>
            <person name="Hamlin N."/>
            <person name="Harris D.E."/>
            <person name="Hidalgo J."/>
            <person name="Hodgson G."/>
            <person name="Holroyd S."/>
            <person name="Hornsby T."/>
            <person name="Howarth S."/>
            <person name="Huckle E.J."/>
            <person name="Hunt S."/>
            <person name="Jagels K."/>
            <person name="James K.D."/>
            <person name="Jones L."/>
            <person name="Jones M."/>
            <person name="Leather S."/>
            <person name="McDonald S."/>
            <person name="McLean J."/>
            <person name="Mooney P."/>
            <person name="Moule S."/>
            <person name="Mungall K.L."/>
            <person name="Murphy L.D."/>
            <person name="Niblett D."/>
            <person name="Odell C."/>
            <person name="Oliver K."/>
            <person name="O'Neil S."/>
            <person name="Pearson D."/>
            <person name="Quail M.A."/>
            <person name="Rabbinowitsch E."/>
            <person name="Rutherford K.M."/>
            <person name="Rutter S."/>
            <person name="Saunders D."/>
            <person name="Seeger K."/>
            <person name="Sharp S."/>
            <person name="Skelton J."/>
            <person name="Simmonds M.N."/>
            <person name="Squares R."/>
            <person name="Squares S."/>
            <person name="Stevens K."/>
            <person name="Taylor K."/>
            <person name="Taylor R.G."/>
            <person name="Tivey A."/>
            <person name="Walsh S.V."/>
            <person name="Warren T."/>
            <person name="Whitehead S."/>
            <person name="Woodward J.R."/>
            <person name="Volckaert G."/>
            <person name="Aert R."/>
            <person name="Robben J."/>
            <person name="Grymonprez B."/>
            <person name="Weltjens I."/>
            <person name="Vanstreels E."/>
            <person name="Rieger M."/>
            <person name="Schaefer M."/>
            <person name="Mueller-Auer S."/>
            <person name="Gabel C."/>
            <person name="Fuchs M."/>
            <person name="Duesterhoeft A."/>
            <person name="Fritzc C."/>
            <person name="Holzer E."/>
            <person name="Moestl D."/>
            <person name="Hilbert H."/>
            <person name="Borzym K."/>
            <person name="Langer I."/>
            <person name="Beck A."/>
            <person name="Lehrach H."/>
            <person name="Reinhardt R."/>
            <person name="Pohl T.M."/>
            <person name="Eger P."/>
            <person name="Zimmermann W."/>
            <person name="Wedler H."/>
            <person name="Wambutt R."/>
            <person name="Purnelle B."/>
            <person name="Goffeau A."/>
            <person name="Cadieu E."/>
            <person name="Dreano S."/>
            <person name="Gloux S."/>
            <person name="Lelaure V."/>
            <person name="Mottier S."/>
            <person name="Galibert F."/>
            <person name="Aves S.J."/>
            <person name="Xiang Z."/>
            <person name="Hunt C."/>
            <person name="Moore K."/>
            <person name="Hurst S.M."/>
            <person name="Lucas M."/>
            <person name="Rochet M."/>
            <person name="Gaillardin C."/>
            <person name="Tallada V.A."/>
            <person name="Garzon A."/>
            <person name="Thode G."/>
            <person name="Daga R.R."/>
            <person name="Cruzado L."/>
            <person name="Jimenez J."/>
            <person name="Sanchez M."/>
            <person name="del Rey F."/>
            <person name="Benito J."/>
            <person name="Dominguez A."/>
            <person name="Revuelta J.L."/>
            <person name="Moreno S."/>
            <person name="Armstrong J."/>
            <person name="Forsburg S.L."/>
            <person name="Cerutti L."/>
            <person name="Lowe T."/>
            <person name="McCombie W.R."/>
            <person name="Paulsen I."/>
            <person name="Potashkin J."/>
            <person name="Shpakovski G.V."/>
            <person name="Ussery D."/>
            <person name="Barrell B.G."/>
            <person name="Nurse P."/>
        </authorList>
    </citation>
    <scope>NUCLEOTIDE SEQUENCE [LARGE SCALE GENOMIC DNA]</scope>
    <source>
        <strain>972 / ATCC 24843</strain>
    </source>
</reference>
<reference key="2">
    <citation type="journal article" date="2008" name="Nature">
        <title>Dynamic repertoire of a eukaryotic transcriptome surveyed at single-nucleotide resolution.</title>
        <authorList>
            <person name="Wilhelm B.T."/>
            <person name="Marguerat S."/>
            <person name="Watt S."/>
            <person name="Schubert F."/>
            <person name="Wood V."/>
            <person name="Goodhead I."/>
            <person name="Penkett C.J."/>
            <person name="Rogers J."/>
            <person name="Baehler J."/>
        </authorList>
    </citation>
    <scope>IDENTIFICATION</scope>
</reference>
<name>SDHF4_SCHPO</name>
<gene>
    <name evidence="5" type="ORF">SPBC26H8.16</name>
</gene>
<organism>
    <name type="scientific">Schizosaccharomyces pombe (strain 972 / ATCC 24843)</name>
    <name type="common">Fission yeast</name>
    <dbReference type="NCBI Taxonomy" id="284812"/>
    <lineage>
        <taxon>Eukaryota</taxon>
        <taxon>Fungi</taxon>
        <taxon>Dikarya</taxon>
        <taxon>Ascomycota</taxon>
        <taxon>Taphrinomycotina</taxon>
        <taxon>Schizosaccharomycetes</taxon>
        <taxon>Schizosaccharomycetales</taxon>
        <taxon>Schizosaccharomycetaceae</taxon>
        <taxon>Schizosaccharomyces</taxon>
    </lineage>
</organism>
<sequence length="100" mass="11649">MFNRNLRAVILKNYNKALTRCLHDAGNLKRPTPPRLPKEQQEEWDRLQKESSKRPVDVMRREKHKDFEGDVNPKTGEIGGPKSEPTVHGDYSYEGRVTDF</sequence>
<comment type="function">
    <text evidence="1">Plays an essential role in the assembly of succinate dehydrogenase (SDH), an enzyme complex (also referred to as respiratory complex II) that is a component of both the tricarboxylic acid (TCA) cycle and the mitochondrial electron transport chain, and which couples the oxidation of succinate to fumarate with the reduction of ubiquinone (coenzyme Q) to ubiquinol. Binds to the flavoprotein subunit sdh1 in its FAD-bound form, blocking the generation of excess reactive oxygen species (ROS) and facilitating its assembly with the iron-sulfur protein subunit sdh2 into the SDH catalytic dimer.</text>
</comment>
<comment type="subunit">
    <text evidence="1">Interacts with sdh1 in its FAD-bound form.</text>
</comment>
<comment type="subcellular location">
    <subcellularLocation>
        <location evidence="1">Mitochondrion matrix</location>
    </subcellularLocation>
</comment>
<comment type="similarity">
    <text evidence="4">Belongs to the SDHAF4 family.</text>
</comment>
<accession>C6Y4C4</accession>